<sequence>MSRYTLAIVGCGVMGQALLSAIYNAPKASDEALQYYPSKIIACNDVPASAELVEKLVSGFETSPNGIEVEIATNDNERAVAEAKVIILGLKPHIVEPVLQQIPNEDGSKLLISLAAGVTLNQLSQYYKKVSRVMTNTPAKYGYGTAIVSHSTSVEPQDKAIVSELVSQVGKCLELPEKNMDAATALVGSGPAFVLLMLESMMEAGLKMGIPLKESRECAMKVLEGTAKMVEISGQSPGVLKHQVCTPGGTTIAGLCVMEDKGVKSGIIRGIEEAARVSKELGQKK</sequence>
<keyword id="KW-0028">Amino-acid biosynthesis</keyword>
<keyword id="KW-0521">NADP</keyword>
<keyword id="KW-0560">Oxidoreductase</keyword>
<keyword id="KW-0641">Proline biosynthesis</keyword>
<keyword id="KW-1185">Reference proteome</keyword>
<evidence type="ECO:0000250" key="1">
    <source>
        <dbReference type="UniProtKB" id="P32263"/>
    </source>
</evidence>
<evidence type="ECO:0000269" key="2">
    <source>
    </source>
</evidence>
<evidence type="ECO:0000303" key="3">
    <source>
    </source>
</evidence>
<evidence type="ECO:0000305" key="4"/>
<evidence type="ECO:0000305" key="5">
    <source>
    </source>
</evidence>
<feature type="chain" id="PRO_0000432233" description="Pyrroline-5-carboxylate reductase">
    <location>
        <begin position="1"/>
        <end position="285"/>
    </location>
</feature>
<reference key="1">
    <citation type="journal article" date="2004" name="Nature">
        <title>Genome evolution in yeasts.</title>
        <authorList>
            <person name="Dujon B."/>
            <person name="Sherman D."/>
            <person name="Fischer G."/>
            <person name="Durrens P."/>
            <person name="Casaregola S."/>
            <person name="Lafontaine I."/>
            <person name="de Montigny J."/>
            <person name="Marck C."/>
            <person name="Neuveglise C."/>
            <person name="Talla E."/>
            <person name="Goffard N."/>
            <person name="Frangeul L."/>
            <person name="Aigle M."/>
            <person name="Anthouard V."/>
            <person name="Babour A."/>
            <person name="Barbe V."/>
            <person name="Barnay S."/>
            <person name="Blanchin S."/>
            <person name="Beckerich J.-M."/>
            <person name="Beyne E."/>
            <person name="Bleykasten C."/>
            <person name="Boisrame A."/>
            <person name="Boyer J."/>
            <person name="Cattolico L."/>
            <person name="Confanioleri F."/>
            <person name="de Daruvar A."/>
            <person name="Despons L."/>
            <person name="Fabre E."/>
            <person name="Fairhead C."/>
            <person name="Ferry-Dumazet H."/>
            <person name="Groppi A."/>
            <person name="Hantraye F."/>
            <person name="Hennequin C."/>
            <person name="Jauniaux N."/>
            <person name="Joyet P."/>
            <person name="Kachouri R."/>
            <person name="Kerrest A."/>
            <person name="Koszul R."/>
            <person name="Lemaire M."/>
            <person name="Lesur I."/>
            <person name="Ma L."/>
            <person name="Muller H."/>
            <person name="Nicaud J.-M."/>
            <person name="Nikolski M."/>
            <person name="Oztas S."/>
            <person name="Ozier-Kalogeropoulos O."/>
            <person name="Pellenz S."/>
            <person name="Potier S."/>
            <person name="Richard G.-F."/>
            <person name="Straub M.-L."/>
            <person name="Suleau A."/>
            <person name="Swennen D."/>
            <person name="Tekaia F."/>
            <person name="Wesolowski-Louvel M."/>
            <person name="Westhof E."/>
            <person name="Wirth B."/>
            <person name="Zeniou-Meyer M."/>
            <person name="Zivanovic Y."/>
            <person name="Bolotin-Fukuhara M."/>
            <person name="Thierry A."/>
            <person name="Bouchier C."/>
            <person name="Caudron B."/>
            <person name="Scarpelli C."/>
            <person name="Gaillardin C."/>
            <person name="Weissenbach J."/>
            <person name="Wincker P."/>
            <person name="Souciet J.-L."/>
        </authorList>
    </citation>
    <scope>NUCLEOTIDE SEQUENCE [LARGE SCALE GENOMIC DNA]</scope>
    <source>
        <strain>ATCC 8585 / CBS 2359 / DSM 70799 / NBRC 1267 / NRRL Y-1140 / WM37</strain>
    </source>
</reference>
<reference key="2">
    <citation type="journal article" date="2014" name="Mol. Microbiol.">
        <title>An alternative, arginase-independent pathway for arginine metabolism in Kluyveromyces lactis involves guanidinobutyrase as a key enzyme.</title>
        <authorList>
            <person name="Romagnoli G."/>
            <person name="Verhoeven M.D."/>
            <person name="Mans R."/>
            <person name="Fleury Rey Y."/>
            <person name="Bel-Rhlid R."/>
            <person name="van den Broek M."/>
            <person name="Seifar R.M."/>
            <person name="Ten Pierick A."/>
            <person name="Thompson M."/>
            <person name="Muller V."/>
            <person name="Wahl S.A."/>
            <person name="Pronk J.T."/>
            <person name="Daran J.M."/>
        </authorList>
    </citation>
    <scope>CATALYTIC ACTIVITY</scope>
    <scope>PATHWAY</scope>
</reference>
<proteinExistence type="evidence at protein level"/>
<comment type="catalytic activity">
    <reaction evidence="2">
        <text>L-proline + NADP(+) = (S)-1-pyrroline-5-carboxylate + NADPH + 2 H(+)</text>
        <dbReference type="Rhea" id="RHEA:14109"/>
        <dbReference type="ChEBI" id="CHEBI:15378"/>
        <dbReference type="ChEBI" id="CHEBI:17388"/>
        <dbReference type="ChEBI" id="CHEBI:57783"/>
        <dbReference type="ChEBI" id="CHEBI:58349"/>
        <dbReference type="ChEBI" id="CHEBI:60039"/>
        <dbReference type="EC" id="1.5.1.2"/>
    </reaction>
</comment>
<comment type="catalytic activity">
    <reaction evidence="2">
        <text>L-proline + NAD(+) = (S)-1-pyrroline-5-carboxylate + NADH + 2 H(+)</text>
        <dbReference type="Rhea" id="RHEA:14105"/>
        <dbReference type="ChEBI" id="CHEBI:15378"/>
        <dbReference type="ChEBI" id="CHEBI:17388"/>
        <dbReference type="ChEBI" id="CHEBI:57540"/>
        <dbReference type="ChEBI" id="CHEBI:57945"/>
        <dbReference type="ChEBI" id="CHEBI:60039"/>
        <dbReference type="EC" id="1.5.1.2"/>
    </reaction>
</comment>
<comment type="pathway">
    <text evidence="5">Amino-acid biosynthesis; L-proline biosynthesis; L-proline from L-glutamate 5-semialdehyde: step 1/1.</text>
</comment>
<comment type="subunit">
    <text evidence="1">Homotetramer.</text>
</comment>
<comment type="similarity">
    <text evidence="4">Belongs to the pyrroline-5-carboxylate reductase family.</text>
</comment>
<organism>
    <name type="scientific">Kluyveromyces lactis (strain ATCC 8585 / CBS 2359 / DSM 70799 / NBRC 1267 / NRRL Y-1140 / WM37)</name>
    <name type="common">Yeast</name>
    <name type="synonym">Candida sphaerica</name>
    <dbReference type="NCBI Taxonomy" id="284590"/>
    <lineage>
        <taxon>Eukaryota</taxon>
        <taxon>Fungi</taxon>
        <taxon>Dikarya</taxon>
        <taxon>Ascomycota</taxon>
        <taxon>Saccharomycotina</taxon>
        <taxon>Saccharomycetes</taxon>
        <taxon>Saccharomycetales</taxon>
        <taxon>Saccharomycetaceae</taxon>
        <taxon>Kluyveromyces</taxon>
    </lineage>
</organism>
<gene>
    <name evidence="3" type="primary">PRO3</name>
    <name type="ordered locus">KLLA0D10736g</name>
</gene>
<accession>Q6CR99</accession>
<dbReference type="EC" id="1.5.1.2" evidence="2"/>
<dbReference type="EMBL" id="CR382124">
    <property type="protein sequence ID" value="CAH00636.1"/>
    <property type="molecule type" value="Genomic_DNA"/>
</dbReference>
<dbReference type="RefSeq" id="XP_453540.1">
    <property type="nucleotide sequence ID" value="XM_453540.1"/>
</dbReference>
<dbReference type="SMR" id="Q6CR99"/>
<dbReference type="FunCoup" id="Q6CR99">
    <property type="interactions" value="479"/>
</dbReference>
<dbReference type="STRING" id="284590.Q6CR99"/>
<dbReference type="PaxDb" id="284590-Q6CR99"/>
<dbReference type="KEGG" id="kla:KLLA0_D10736g"/>
<dbReference type="eggNOG" id="KOG3124">
    <property type="taxonomic scope" value="Eukaryota"/>
</dbReference>
<dbReference type="HOGENOM" id="CLU_042344_1_2_1"/>
<dbReference type="InParanoid" id="Q6CR99"/>
<dbReference type="OMA" id="VWAVKPQ"/>
<dbReference type="UniPathway" id="UPA00098">
    <property type="reaction ID" value="UER00361"/>
</dbReference>
<dbReference type="Proteomes" id="UP000000598">
    <property type="component" value="Chromosome D"/>
</dbReference>
<dbReference type="GO" id="GO:0004735">
    <property type="term" value="F:pyrroline-5-carboxylate reductase activity"/>
    <property type="evidence" value="ECO:0007669"/>
    <property type="project" value="UniProtKB-EC"/>
</dbReference>
<dbReference type="GO" id="GO:0055129">
    <property type="term" value="P:L-proline biosynthetic process"/>
    <property type="evidence" value="ECO:0007669"/>
    <property type="project" value="UniProtKB-UniPathway"/>
</dbReference>
<dbReference type="FunFam" id="1.10.3730.10:FF:000001">
    <property type="entry name" value="Pyrroline-5-carboxylate reductase"/>
    <property type="match status" value="1"/>
</dbReference>
<dbReference type="Gene3D" id="3.40.50.720">
    <property type="entry name" value="NAD(P)-binding Rossmann-like Domain"/>
    <property type="match status" value="1"/>
</dbReference>
<dbReference type="Gene3D" id="1.10.3730.10">
    <property type="entry name" value="ProC C-terminal domain-like"/>
    <property type="match status" value="1"/>
</dbReference>
<dbReference type="HAMAP" id="MF_01925">
    <property type="entry name" value="P5C_reductase"/>
    <property type="match status" value="1"/>
</dbReference>
<dbReference type="InterPro" id="IPR008927">
    <property type="entry name" value="6-PGluconate_DH-like_C_sf"/>
</dbReference>
<dbReference type="InterPro" id="IPR036291">
    <property type="entry name" value="NAD(P)-bd_dom_sf"/>
</dbReference>
<dbReference type="InterPro" id="IPR028939">
    <property type="entry name" value="P5C_Rdtase_cat_N"/>
</dbReference>
<dbReference type="InterPro" id="IPR053790">
    <property type="entry name" value="P5CR-like_CS"/>
</dbReference>
<dbReference type="InterPro" id="IPR029036">
    <property type="entry name" value="P5CR_dimer"/>
</dbReference>
<dbReference type="InterPro" id="IPR000304">
    <property type="entry name" value="Pyrroline-COOH_reductase"/>
</dbReference>
<dbReference type="NCBIfam" id="TIGR00112">
    <property type="entry name" value="proC"/>
    <property type="match status" value="1"/>
</dbReference>
<dbReference type="PANTHER" id="PTHR11645">
    <property type="entry name" value="PYRROLINE-5-CARBOXYLATE REDUCTASE"/>
    <property type="match status" value="1"/>
</dbReference>
<dbReference type="PANTHER" id="PTHR11645:SF0">
    <property type="entry name" value="PYRROLINE-5-CARBOXYLATE REDUCTASE 3"/>
    <property type="match status" value="1"/>
</dbReference>
<dbReference type="Pfam" id="PF03807">
    <property type="entry name" value="F420_oxidored"/>
    <property type="match status" value="1"/>
</dbReference>
<dbReference type="Pfam" id="PF14748">
    <property type="entry name" value="P5CR_dimer"/>
    <property type="match status" value="1"/>
</dbReference>
<dbReference type="PIRSF" id="PIRSF000193">
    <property type="entry name" value="Pyrrol-5-carb_rd"/>
    <property type="match status" value="1"/>
</dbReference>
<dbReference type="SUPFAM" id="SSF48179">
    <property type="entry name" value="6-phosphogluconate dehydrogenase C-terminal domain-like"/>
    <property type="match status" value="1"/>
</dbReference>
<dbReference type="SUPFAM" id="SSF51735">
    <property type="entry name" value="NAD(P)-binding Rossmann-fold domains"/>
    <property type="match status" value="1"/>
</dbReference>
<dbReference type="PROSITE" id="PS00521">
    <property type="entry name" value="P5CR"/>
    <property type="match status" value="1"/>
</dbReference>
<protein>
    <recommendedName>
        <fullName evidence="3">Pyrroline-5-carboxylate reductase</fullName>
        <shortName evidence="1">P5C reductase</shortName>
        <shortName evidence="1">P5CR</shortName>
        <ecNumber evidence="2">1.5.1.2</ecNumber>
    </recommendedName>
</protein>
<name>P5CR_KLULA</name>